<name>CYHEI_PIGEN</name>
<organism evidence="4">
    <name type="scientific">Pigea enneasperma</name>
    <name type="common">Spade flower</name>
    <name type="synonym">Afrohybanthus enneaspermus</name>
    <dbReference type="NCBI Taxonomy" id="212266"/>
    <lineage>
        <taxon>Eukaryota</taxon>
        <taxon>Viridiplantae</taxon>
        <taxon>Streptophyta</taxon>
        <taxon>Embryophyta</taxon>
        <taxon>Tracheophyta</taxon>
        <taxon>Spermatophyta</taxon>
        <taxon>Magnoliopsida</taxon>
        <taxon>eudicotyledons</taxon>
        <taxon>Gunneridae</taxon>
        <taxon>Pentapetalae</taxon>
        <taxon>rosids</taxon>
        <taxon>fabids</taxon>
        <taxon>Malpighiales</taxon>
        <taxon>Violaceae</taxon>
        <taxon>Pigea</taxon>
    </lineage>
</organism>
<accession>C0HLP3</accession>
<feature type="peptide" id="PRO_0000450765" description="Cyclotide hyen-I" evidence="2">
    <location>
        <begin position="1"/>
        <end position="31"/>
    </location>
</feature>
<feature type="disulfide bond" evidence="2 3">
    <location>
        <begin position="5"/>
        <end position="21"/>
    </location>
</feature>
<feature type="disulfide bond" evidence="2 3">
    <location>
        <begin position="9"/>
        <end position="23"/>
    </location>
</feature>
<feature type="disulfide bond" evidence="2 3">
    <location>
        <begin position="14"/>
        <end position="28"/>
    </location>
</feature>
<feature type="cross-link" description="Cyclopeptide (Gly-Asp)" evidence="1">
    <location>
        <begin position="1"/>
        <end position="31"/>
    </location>
</feature>
<dbReference type="SMR" id="C0HLP3"/>
<dbReference type="GO" id="GO:0051715">
    <property type="term" value="P:cytolysis in another organism"/>
    <property type="evidence" value="ECO:0000314"/>
    <property type="project" value="UniProtKB"/>
</dbReference>
<dbReference type="GO" id="GO:0006952">
    <property type="term" value="P:defense response"/>
    <property type="evidence" value="ECO:0000314"/>
    <property type="project" value="UniProtKB"/>
</dbReference>
<dbReference type="InterPro" id="IPR005535">
    <property type="entry name" value="Cyclotide"/>
</dbReference>
<dbReference type="InterPro" id="IPR012323">
    <property type="entry name" value="Cyclotide_bracelet_CS"/>
</dbReference>
<dbReference type="InterPro" id="IPR036146">
    <property type="entry name" value="Cyclotide_sf"/>
</dbReference>
<dbReference type="Pfam" id="PF03784">
    <property type="entry name" value="Cyclotide"/>
    <property type="match status" value="1"/>
</dbReference>
<dbReference type="PIRSF" id="PIRSF037891">
    <property type="entry name" value="Cycloviolacin"/>
    <property type="match status" value="1"/>
</dbReference>
<dbReference type="SUPFAM" id="SSF57038">
    <property type="entry name" value="Cyclotides"/>
    <property type="match status" value="1"/>
</dbReference>
<dbReference type="PROSITE" id="PS51052">
    <property type="entry name" value="CYCLOTIDE"/>
    <property type="match status" value="1"/>
</dbReference>
<dbReference type="PROSITE" id="PS60008">
    <property type="entry name" value="CYCLOTIDE_BRACELET"/>
    <property type="match status" value="1"/>
</dbReference>
<reference evidence="5" key="1">
    <citation type="journal article" date="2020" name="J. Biol. Chem.">
        <title>Discovery and mechanistic studies of cytotoxic cyclotides from the medicinal herb Hybanthus enneaspermus.</title>
        <authorList>
            <person name="Du Q."/>
            <person name="Chan L.Y."/>
            <person name="Gilding E.K."/>
            <person name="Henriques S.T."/>
            <person name="Condon N.D."/>
            <person name="Ravipati A.S."/>
            <person name="Kaas Q."/>
            <person name="Huang Y.H."/>
            <person name="Craik D.J."/>
        </authorList>
    </citation>
    <scope>PROTEIN SEQUENCE</scope>
    <scope>MASS SPECTROMETRY</scope>
    <scope>TISSUE SPECIFICITY</scope>
    <scope>DISULFIDE BONDS</scope>
</reference>
<protein>
    <recommendedName>
        <fullName evidence="4">Cyclotide hyen-I</fullName>
    </recommendedName>
</protein>
<comment type="function">
    <text evidence="2">Probably participates in a plant defense mechanism.</text>
</comment>
<comment type="tissue specificity">
    <text evidence="3">Detected in seeds (at protein level).</text>
</comment>
<comment type="domain">
    <text evidence="5">The presence of a 'disulfide through disulfide knot' structurally defines this protein as a knottin.</text>
</comment>
<comment type="PTM">
    <text evidence="2">This is a cyclic peptide.</text>
</comment>
<comment type="mass spectrometry"/>
<comment type="similarity">
    <text evidence="2">Belongs to the cyclotide family. Bracelet subfamily.</text>
</comment>
<comment type="caution">
    <text evidence="2">This peptide is cyclic. The start position was chosen by similarity to Oak1 (kalata B1) for which the DNA sequence is known.</text>
</comment>
<proteinExistence type="evidence at protein level"/>
<evidence type="ECO:0000250" key="1">
    <source>
        <dbReference type="UniProtKB" id="C0HK39"/>
    </source>
</evidence>
<evidence type="ECO:0000255" key="2">
    <source>
        <dbReference type="PROSITE-ProRule" id="PRU00395"/>
    </source>
</evidence>
<evidence type="ECO:0000269" key="3">
    <source>
    </source>
</evidence>
<evidence type="ECO:0000303" key="4">
    <source>
    </source>
</evidence>
<evidence type="ECO:0000305" key="5"/>
<keyword id="KW-0903">Direct protein sequencing</keyword>
<keyword id="KW-1015">Disulfide bond</keyword>
<keyword id="KW-0960">Knottin</keyword>
<keyword id="KW-0611">Plant defense</keyword>
<sequence>GSTPCGESCVWIPCISGIVGCSCSNKVCYMD</sequence>